<proteinExistence type="evidence at transcript level"/>
<comment type="catalytic activity">
    <reaction evidence="6">
        <text>a very-long-chain acyl-CoA + malonyl-CoA + H(+) = a very-long-chain 3-oxoacyl-CoA + CO2 + CoA</text>
        <dbReference type="Rhea" id="RHEA:32727"/>
        <dbReference type="ChEBI" id="CHEBI:15378"/>
        <dbReference type="ChEBI" id="CHEBI:16526"/>
        <dbReference type="ChEBI" id="CHEBI:57287"/>
        <dbReference type="ChEBI" id="CHEBI:57384"/>
        <dbReference type="ChEBI" id="CHEBI:90725"/>
        <dbReference type="ChEBI" id="CHEBI:90736"/>
        <dbReference type="EC" id="2.3.1.199"/>
    </reaction>
</comment>
<comment type="pathway">
    <text>Lipid metabolism; fatty acid biosynthesis.</text>
</comment>
<comment type="subcellular location">
    <subcellularLocation>
        <location evidence="4">Endoplasmic reticulum</location>
    </subcellularLocation>
</comment>
<comment type="tissue specificity">
    <text evidence="4">Expressed in siliques, flowers and leaves.</text>
</comment>
<comment type="induction">
    <text evidence="3 4">Repressed by herbicides such as flufenacet and benfuresate (PubMed:12916765). Up-regulated by osmotic stress and down-regulated by low temperature, salt and drought (PubMed:18465198).</text>
</comment>
<comment type="similarity">
    <text evidence="6">Belongs to the thiolase-like superfamily. Chalcone/stilbene synthases family.</text>
</comment>
<reference key="1">
    <citation type="journal article" date="1999" name="Nature">
        <title>Sequence and analysis of chromosome 2 of the plant Arabidopsis thaliana.</title>
        <authorList>
            <person name="Lin X."/>
            <person name="Kaul S."/>
            <person name="Rounsley S.D."/>
            <person name="Shea T.P."/>
            <person name="Benito M.-I."/>
            <person name="Town C.D."/>
            <person name="Fujii C.Y."/>
            <person name="Mason T.M."/>
            <person name="Bowman C.L."/>
            <person name="Barnstead M.E."/>
            <person name="Feldblyum T.V."/>
            <person name="Buell C.R."/>
            <person name="Ketchum K.A."/>
            <person name="Lee J.J."/>
            <person name="Ronning C.M."/>
            <person name="Koo H.L."/>
            <person name="Moffat K.S."/>
            <person name="Cronin L.A."/>
            <person name="Shen M."/>
            <person name="Pai G."/>
            <person name="Van Aken S."/>
            <person name="Umayam L."/>
            <person name="Tallon L.J."/>
            <person name="Gill J.E."/>
            <person name="Adams M.D."/>
            <person name="Carrera A.J."/>
            <person name="Creasy T.H."/>
            <person name="Goodman H.M."/>
            <person name="Somerville C.R."/>
            <person name="Copenhaver G.P."/>
            <person name="Preuss D."/>
            <person name="Nierman W.C."/>
            <person name="White O."/>
            <person name="Eisen J.A."/>
            <person name="Salzberg S.L."/>
            <person name="Fraser C.M."/>
            <person name="Venter J.C."/>
        </authorList>
    </citation>
    <scope>NUCLEOTIDE SEQUENCE [LARGE SCALE GENOMIC DNA]</scope>
    <source>
        <strain>cv. Columbia</strain>
    </source>
</reference>
<reference key="2">
    <citation type="journal article" date="2017" name="Plant J.">
        <title>Araport11: a complete reannotation of the Arabidopsis thaliana reference genome.</title>
        <authorList>
            <person name="Cheng C.Y."/>
            <person name="Krishnakumar V."/>
            <person name="Chan A.P."/>
            <person name="Thibaud-Nissen F."/>
            <person name="Schobel S."/>
            <person name="Town C.D."/>
        </authorList>
    </citation>
    <scope>GENOME REANNOTATION</scope>
    <source>
        <strain>cv. Columbia</strain>
    </source>
</reference>
<reference key="3">
    <citation type="journal article" date="2003" name="Science">
        <title>Empirical analysis of transcriptional activity in the Arabidopsis genome.</title>
        <authorList>
            <person name="Yamada K."/>
            <person name="Lim J."/>
            <person name="Dale J.M."/>
            <person name="Chen H."/>
            <person name="Shinn P."/>
            <person name="Palm C.J."/>
            <person name="Southwick A.M."/>
            <person name="Wu H.C."/>
            <person name="Kim C.J."/>
            <person name="Nguyen M."/>
            <person name="Pham P.K."/>
            <person name="Cheuk R.F."/>
            <person name="Karlin-Newmann G."/>
            <person name="Liu S.X."/>
            <person name="Lam B."/>
            <person name="Sakano H."/>
            <person name="Wu T."/>
            <person name="Yu G."/>
            <person name="Miranda M."/>
            <person name="Quach H.L."/>
            <person name="Tripp M."/>
            <person name="Chang C.H."/>
            <person name="Lee J.M."/>
            <person name="Toriumi M.J."/>
            <person name="Chan M.M."/>
            <person name="Tang C.C."/>
            <person name="Onodera C.S."/>
            <person name="Deng J.M."/>
            <person name="Akiyama K."/>
            <person name="Ansari Y."/>
            <person name="Arakawa T."/>
            <person name="Banh J."/>
            <person name="Banno F."/>
            <person name="Bowser L."/>
            <person name="Brooks S.Y."/>
            <person name="Carninci P."/>
            <person name="Chao Q."/>
            <person name="Choy N."/>
            <person name="Enju A."/>
            <person name="Goldsmith A.D."/>
            <person name="Gurjal M."/>
            <person name="Hansen N.F."/>
            <person name="Hayashizaki Y."/>
            <person name="Johnson-Hopson C."/>
            <person name="Hsuan V.W."/>
            <person name="Iida K."/>
            <person name="Karnes M."/>
            <person name="Khan S."/>
            <person name="Koesema E."/>
            <person name="Ishida J."/>
            <person name="Jiang P.X."/>
            <person name="Jones T."/>
            <person name="Kawai J."/>
            <person name="Kamiya A."/>
            <person name="Meyers C."/>
            <person name="Nakajima M."/>
            <person name="Narusaka M."/>
            <person name="Seki M."/>
            <person name="Sakurai T."/>
            <person name="Satou M."/>
            <person name="Tamse R."/>
            <person name="Vaysberg M."/>
            <person name="Wallender E.K."/>
            <person name="Wong C."/>
            <person name="Yamamura Y."/>
            <person name="Yuan S."/>
            <person name="Shinozaki K."/>
            <person name="Davis R.W."/>
            <person name="Theologis A."/>
            <person name="Ecker J.R."/>
        </authorList>
    </citation>
    <scope>NUCLEOTIDE SEQUENCE [LARGE SCALE MRNA]</scope>
    <source>
        <strain>cv. Columbia</strain>
    </source>
</reference>
<reference key="4">
    <citation type="submission" date="2002-03" db="EMBL/GenBank/DDBJ databases">
        <title>Full-length cDNA from Arabidopsis thaliana.</title>
        <authorList>
            <person name="Brover V.V."/>
            <person name="Troukhan M.E."/>
            <person name="Alexandrov N.A."/>
            <person name="Lu Y.-P."/>
            <person name="Flavell R.B."/>
            <person name="Feldmann K.A."/>
        </authorList>
    </citation>
    <scope>NUCLEOTIDE SEQUENCE [LARGE SCALE MRNA]</scope>
</reference>
<reference key="5">
    <citation type="journal article" date="2003" name="Pest Manag. Sci.">
        <title>Flufenacet herbicide treatment phenocopies the fiddlehead mutant in Arabidopsis thaliana.</title>
        <authorList>
            <person name="Lechelt-Kunze C."/>
            <person name="Meissner R.C."/>
            <person name="Drewes M."/>
            <person name="Tietjen K."/>
        </authorList>
    </citation>
    <scope>INDUCTION</scope>
    <scope>GENE FAMILY</scope>
</reference>
<reference key="6">
    <citation type="journal article" date="2008" name="Plant Mol. Biol.">
        <title>The VLCFA elongase gene family in Arabidopsis thaliana: phylogenetic analysis, 3D modelling and expression profiling.</title>
        <authorList>
            <person name="Joubes J."/>
            <person name="Raffaele S."/>
            <person name="Bourdenx B."/>
            <person name="Garcia C."/>
            <person name="Laroche-Traineau J."/>
            <person name="Moreau P."/>
            <person name="Domergue F."/>
            <person name="Lessire R."/>
        </authorList>
    </citation>
    <scope>GENE FAMILY</scope>
    <scope>NOMENCLATURE</scope>
    <scope>3D-STRUCTURE MODELING</scope>
    <scope>SUBCELLULAR LOCATION</scope>
    <scope>TISSUE SPECIFICITY</scope>
    <scope>INDUCTION</scope>
</reference>
<protein>
    <recommendedName>
        <fullName evidence="5">3-ketoacyl-CoA synthase 12</fullName>
        <shortName evidence="5">KCS-12</shortName>
        <ecNumber evidence="6">2.3.1.199</ecNumber>
    </recommendedName>
    <alternativeName>
        <fullName evidence="5">Very long-chain fatty acid condensing enzyme 12</fullName>
        <shortName evidence="5">VLCFA condensing enzyme 12</shortName>
    </alternativeName>
</protein>
<dbReference type="EC" id="2.3.1.199" evidence="6"/>
<dbReference type="EMBL" id="AC007171">
    <property type="protein sequence ID" value="AAD24372.1"/>
    <property type="molecule type" value="Genomic_DNA"/>
</dbReference>
<dbReference type="EMBL" id="CP002685">
    <property type="protein sequence ID" value="AEC08152.1"/>
    <property type="molecule type" value="Genomic_DNA"/>
</dbReference>
<dbReference type="EMBL" id="CP002685">
    <property type="protein sequence ID" value="ANM62747.1"/>
    <property type="molecule type" value="Genomic_DNA"/>
</dbReference>
<dbReference type="EMBL" id="AY056170">
    <property type="protein sequence ID" value="AAL07019.1"/>
    <property type="molecule type" value="mRNA"/>
</dbReference>
<dbReference type="EMBL" id="AY091195">
    <property type="protein sequence ID" value="AAM14134.1"/>
    <property type="molecule type" value="mRNA"/>
</dbReference>
<dbReference type="EMBL" id="AY084716">
    <property type="protein sequence ID" value="AAM61290.1"/>
    <property type="molecule type" value="mRNA"/>
</dbReference>
<dbReference type="PIR" id="C84687">
    <property type="entry name" value="C84687"/>
</dbReference>
<dbReference type="RefSeq" id="NP_001318305.1">
    <property type="nucleotide sequence ID" value="NM_001336183.1"/>
</dbReference>
<dbReference type="RefSeq" id="NP_180431.1">
    <property type="nucleotide sequence ID" value="NM_128424.3"/>
</dbReference>
<dbReference type="SMR" id="Q9SIB2"/>
<dbReference type="FunCoup" id="Q9SIB2">
    <property type="interactions" value="355"/>
</dbReference>
<dbReference type="STRING" id="3702.Q9SIB2"/>
<dbReference type="PaxDb" id="3702-AT2G28630.1"/>
<dbReference type="ProteomicsDB" id="247147"/>
<dbReference type="EnsemblPlants" id="AT2G28630.1">
    <property type="protein sequence ID" value="AT2G28630.1"/>
    <property type="gene ID" value="AT2G28630"/>
</dbReference>
<dbReference type="EnsemblPlants" id="AT2G28630.2">
    <property type="protein sequence ID" value="AT2G28630.2"/>
    <property type="gene ID" value="AT2G28630"/>
</dbReference>
<dbReference type="GeneID" id="817412"/>
<dbReference type="Gramene" id="AT2G28630.1">
    <property type="protein sequence ID" value="AT2G28630.1"/>
    <property type="gene ID" value="AT2G28630"/>
</dbReference>
<dbReference type="Gramene" id="AT2G28630.2">
    <property type="protein sequence ID" value="AT2G28630.2"/>
    <property type="gene ID" value="AT2G28630"/>
</dbReference>
<dbReference type="KEGG" id="ath:AT2G28630"/>
<dbReference type="Araport" id="AT2G28630"/>
<dbReference type="TAIR" id="AT2G28630">
    <property type="gene designation" value="KCS12"/>
</dbReference>
<dbReference type="eggNOG" id="ENOG502QPV6">
    <property type="taxonomic scope" value="Eukaryota"/>
</dbReference>
<dbReference type="HOGENOM" id="CLU_013238_3_1_1"/>
<dbReference type="InParanoid" id="Q9SIB2"/>
<dbReference type="OMA" id="EDAYSCC"/>
<dbReference type="PhylomeDB" id="Q9SIB2"/>
<dbReference type="BioCyc" id="ARA:AT2G28630-MONOMER"/>
<dbReference type="UniPathway" id="UPA00094"/>
<dbReference type="PRO" id="PR:Q9SIB2"/>
<dbReference type="Proteomes" id="UP000006548">
    <property type="component" value="Chromosome 2"/>
</dbReference>
<dbReference type="ExpressionAtlas" id="Q9SIB2">
    <property type="expression patterns" value="baseline and differential"/>
</dbReference>
<dbReference type="GO" id="GO:0005783">
    <property type="term" value="C:endoplasmic reticulum"/>
    <property type="evidence" value="ECO:0000314"/>
    <property type="project" value="TAIR"/>
</dbReference>
<dbReference type="GO" id="GO:0016020">
    <property type="term" value="C:membrane"/>
    <property type="evidence" value="ECO:0007669"/>
    <property type="project" value="InterPro"/>
</dbReference>
<dbReference type="GO" id="GO:0009922">
    <property type="term" value="F:fatty acid elongase activity"/>
    <property type="evidence" value="ECO:0007669"/>
    <property type="project" value="UniProtKB-EC"/>
</dbReference>
<dbReference type="GO" id="GO:0006633">
    <property type="term" value="P:fatty acid biosynthetic process"/>
    <property type="evidence" value="ECO:0007669"/>
    <property type="project" value="UniProtKB-UniPathway"/>
</dbReference>
<dbReference type="CDD" id="cd00831">
    <property type="entry name" value="CHS_like"/>
    <property type="match status" value="1"/>
</dbReference>
<dbReference type="Gene3D" id="3.40.47.10">
    <property type="match status" value="1"/>
</dbReference>
<dbReference type="InterPro" id="IPR012392">
    <property type="entry name" value="3-ktacl-CoA_syn"/>
</dbReference>
<dbReference type="InterPro" id="IPR013747">
    <property type="entry name" value="ACP_syn_III_C"/>
</dbReference>
<dbReference type="InterPro" id="IPR013601">
    <property type="entry name" value="FAE1_typ3_polyketide_synth"/>
</dbReference>
<dbReference type="InterPro" id="IPR016039">
    <property type="entry name" value="Thiolase-like"/>
</dbReference>
<dbReference type="PANTHER" id="PTHR31561">
    <property type="entry name" value="3-KETOACYL-COA SYNTHASE"/>
    <property type="match status" value="1"/>
</dbReference>
<dbReference type="Pfam" id="PF08541">
    <property type="entry name" value="ACP_syn_III_C"/>
    <property type="match status" value="1"/>
</dbReference>
<dbReference type="Pfam" id="PF08392">
    <property type="entry name" value="FAE1_CUT1_RppA"/>
    <property type="match status" value="1"/>
</dbReference>
<dbReference type="PIRSF" id="PIRSF036417">
    <property type="entry name" value="3-ktacl-CoA_syn"/>
    <property type="match status" value="1"/>
</dbReference>
<dbReference type="SUPFAM" id="SSF53901">
    <property type="entry name" value="Thiolase-like"/>
    <property type="match status" value="1"/>
</dbReference>
<name>KCS12_ARATH</name>
<evidence type="ECO:0000250" key="1">
    <source>
        <dbReference type="UniProtKB" id="Q38860"/>
    </source>
</evidence>
<evidence type="ECO:0000255" key="2"/>
<evidence type="ECO:0000269" key="3">
    <source>
    </source>
</evidence>
<evidence type="ECO:0000269" key="4">
    <source>
    </source>
</evidence>
<evidence type="ECO:0000303" key="5">
    <source>
    </source>
</evidence>
<evidence type="ECO:0000305" key="6"/>
<evidence type="ECO:0000312" key="7">
    <source>
        <dbReference type="Araport" id="AT2G28630"/>
    </source>
</evidence>
<evidence type="ECO:0000312" key="8">
    <source>
        <dbReference type="EMBL" id="AAD24372.1"/>
    </source>
</evidence>
<organism>
    <name type="scientific">Arabidopsis thaliana</name>
    <name type="common">Mouse-ear cress</name>
    <dbReference type="NCBI Taxonomy" id="3702"/>
    <lineage>
        <taxon>Eukaryota</taxon>
        <taxon>Viridiplantae</taxon>
        <taxon>Streptophyta</taxon>
        <taxon>Embryophyta</taxon>
        <taxon>Tracheophyta</taxon>
        <taxon>Spermatophyta</taxon>
        <taxon>Magnoliopsida</taxon>
        <taxon>eudicotyledons</taxon>
        <taxon>Gunneridae</taxon>
        <taxon>Pentapetalae</taxon>
        <taxon>rosids</taxon>
        <taxon>malvids</taxon>
        <taxon>Brassicales</taxon>
        <taxon>Brassicaceae</taxon>
        <taxon>Camelineae</taxon>
        <taxon>Arabidopsis</taxon>
    </lineage>
</organism>
<accession>Q9SIB2</accession>
<accession>Q8LFQ0</accession>
<sequence length="476" mass="53974">MDLLFLFFSLLLSYLFFKIWKLIDSKQDKDCYILDYQCHKPTDDRMVSTQFSGEIIYRNQNLGLTEYKFLLKAIVSSGIGEQTYAPRLVFEGREERPSLQDGISEMEEFYVDSIGKLLERNQISPKDIDILVVNVSMLSSTPSLASRIINHYKMRDDVKVFNLTGMGCSASLISVDIVKNIFKSYANKLALVATSESLSPNWYSGNNRSMILANCLFRSGGCAILLTNKRSLRKKAMFKLKCMVRTHHGAREESYNCCIQAEDEQGRVGFYLGKNLPKAATRAFVENLKVITPKILPVTELIRFMLKLLIKKIKIRQNPSKGSTNLPPGTPLKAGINFKTGIEHFCIHTGGKAVIDGIGHSLDLNEYDIEPARMTLHRFGNTSASSLWYVLAYMEAKKRLKRGDRVFMISFGAGFKCNSCVWEVVRDLTGGESKGNVWNHCIDDYPPKSILNPYLEKFGWIQDEDPDTFKVPDAFM</sequence>
<keyword id="KW-0012">Acyltransferase</keyword>
<keyword id="KW-0256">Endoplasmic reticulum</keyword>
<keyword id="KW-1185">Reference proteome</keyword>
<keyword id="KW-0732">Signal</keyword>
<keyword id="KW-0808">Transferase</keyword>
<gene>
    <name evidence="5" type="primary">KCS12</name>
    <name evidence="7" type="ordered locus">At2g28630</name>
    <name evidence="8" type="ORF">T8O18.8</name>
</gene>
<feature type="signal peptide" evidence="2">
    <location>
        <begin position="1"/>
        <end position="25"/>
    </location>
</feature>
<feature type="chain" id="PRO_0000249104" description="3-ketoacyl-CoA synthase 12">
    <location>
        <begin position="26"/>
        <end position="476"/>
    </location>
</feature>
<feature type="domain" description="FAE" evidence="2">
    <location>
        <begin position="26"/>
        <end position="313"/>
    </location>
</feature>
<feature type="active site" evidence="1">
    <location>
        <position position="168"/>
    </location>
</feature>
<feature type="active site" evidence="1">
    <location>
        <position position="247"/>
    </location>
</feature>
<feature type="active site" evidence="1">
    <location>
        <position position="344"/>
    </location>
</feature>
<feature type="active site" evidence="1">
    <location>
        <position position="348"/>
    </location>
</feature>
<feature type="active site" evidence="1">
    <location>
        <position position="377"/>
    </location>
</feature>
<feature type="active site" evidence="1">
    <location>
        <position position="381"/>
    </location>
</feature>
<feature type="sequence conflict" description="In Ref. 4; AAM61290." evidence="6" ref="4">
    <original>E</original>
    <variation>D</variation>
    <location>
        <position position="286"/>
    </location>
</feature>